<geneLocation type="plasmid">
    <name>pNG700</name>
</geneLocation>
<accession>Q75ZQ2</accession>
<accession>Q5V6L4</accession>
<organism>
    <name type="scientific">Haloarcula marismortui (strain ATCC 43049 / DSM 3752 / JCM 8966 / VKM B-1809)</name>
    <name type="common">Halobacterium marismortui</name>
    <dbReference type="NCBI Taxonomy" id="272569"/>
    <lineage>
        <taxon>Archaea</taxon>
        <taxon>Methanobacteriati</taxon>
        <taxon>Methanobacteriota</taxon>
        <taxon>Stenosarchaea group</taxon>
        <taxon>Halobacteria</taxon>
        <taxon>Halobacteriales</taxon>
        <taxon>Haloarculaceae</taxon>
        <taxon>Haloarcula</taxon>
    </lineage>
</organism>
<comment type="function">
    <text evidence="1">Required for maturation of urease via the functional incorporation of the urease nickel metallocenter.</text>
</comment>
<comment type="subunit">
    <text evidence="1">UreD, UreF and UreG form a complex that acts as a GTP-hydrolysis-dependent molecular chaperone, activating the urease apoprotein by helping to assemble the nickel containing metallocenter of UreC. The UreE protein probably delivers the nickel.</text>
</comment>
<comment type="subcellular location">
    <subcellularLocation>
        <location evidence="1">Cytoplasm</location>
    </subcellularLocation>
</comment>
<comment type="similarity">
    <text evidence="1">Belongs to the UreD family.</text>
</comment>
<evidence type="ECO:0000255" key="1">
    <source>
        <dbReference type="HAMAP-Rule" id="MF_01384"/>
    </source>
</evidence>
<proteinExistence type="inferred from homology"/>
<keyword id="KW-0143">Chaperone</keyword>
<keyword id="KW-0963">Cytoplasm</keyword>
<keyword id="KW-0996">Nickel insertion</keyword>
<keyword id="KW-0614">Plasmid</keyword>
<keyword id="KW-1185">Reference proteome</keyword>
<gene>
    <name evidence="1" type="primary">ureD</name>
    <name type="ordered locus">pNG7127</name>
</gene>
<protein>
    <recommendedName>
        <fullName evidence="1">Urease accessory protein UreD</fullName>
    </recommendedName>
</protein>
<name>URED_HALMA</name>
<dbReference type="EMBL" id="AY596296">
    <property type="protein sequence ID" value="AAV44838.1"/>
    <property type="molecule type" value="Genomic_DNA"/>
</dbReference>
<dbReference type="EMBL" id="AB119092">
    <property type="protein sequence ID" value="BAC84961.1"/>
    <property type="molecule type" value="Genomic_DNA"/>
</dbReference>
<dbReference type="RefSeq" id="WP_011222587.1">
    <property type="nucleotide sequence ID" value="NC_006395.1"/>
</dbReference>
<dbReference type="SMR" id="Q75ZQ2"/>
<dbReference type="EnsemblBacteria" id="AAV44838">
    <property type="protein sequence ID" value="AAV44838"/>
    <property type="gene ID" value="pNG7127"/>
</dbReference>
<dbReference type="GeneID" id="40151399"/>
<dbReference type="KEGG" id="hma:pNG7127"/>
<dbReference type="PATRIC" id="fig|272569.17.peg.570"/>
<dbReference type="HOGENOM" id="CLU_056339_1_0_2"/>
<dbReference type="Proteomes" id="UP000001169">
    <property type="component" value="Plasmid pNG700"/>
</dbReference>
<dbReference type="GO" id="GO:0005737">
    <property type="term" value="C:cytoplasm"/>
    <property type="evidence" value="ECO:0007669"/>
    <property type="project" value="UniProtKB-SubCell"/>
</dbReference>
<dbReference type="GO" id="GO:0016151">
    <property type="term" value="F:nickel cation binding"/>
    <property type="evidence" value="ECO:0007669"/>
    <property type="project" value="UniProtKB-UniRule"/>
</dbReference>
<dbReference type="HAMAP" id="MF_01384">
    <property type="entry name" value="UreD"/>
    <property type="match status" value="1"/>
</dbReference>
<dbReference type="InterPro" id="IPR002669">
    <property type="entry name" value="UreD"/>
</dbReference>
<dbReference type="PANTHER" id="PTHR33643">
    <property type="entry name" value="UREASE ACCESSORY PROTEIN D"/>
    <property type="match status" value="1"/>
</dbReference>
<dbReference type="PANTHER" id="PTHR33643:SF1">
    <property type="entry name" value="UREASE ACCESSORY PROTEIN D"/>
    <property type="match status" value="1"/>
</dbReference>
<dbReference type="Pfam" id="PF01774">
    <property type="entry name" value="UreD"/>
    <property type="match status" value="1"/>
</dbReference>
<feature type="chain" id="PRO_0000340536" description="Urease accessory protein UreD">
    <location>
        <begin position="1"/>
        <end position="299"/>
    </location>
</feature>
<sequence length="299" mass="31190">MAADAPHPAFEGYATEAVPQAAVGSPGKDGVLELTFERTADGTTLVHDYATVPFHISGTLGYDPLPEADTVFIQSPTGGVAQGDRHDVSITVGDEAVAHVSTQSSTKVQTMTCNYAAADTTLSVGAGGHLDYVPEPTILHADSRYLQELSVDLAPGATAVVSDVVVPGRLARGERFEFERYLSRVRATGPDGHLFEDATHLTPGDEDPTAPGVLGEFTVYGTTFVLAPDHDEAELSDALHAVVTDGDARAGATALPNGAGVAVRALGDRAETVQATLHAAWDHARIELLDAPAPSGRKY</sequence>
<reference key="1">
    <citation type="journal article" date="2004" name="Biosci. Biotechnol. Biochem.">
        <title>Ureases of extreme halophiles of the genus Haloarcula with a unique structure of gene cluster.</title>
        <authorList>
            <person name="Mizuki T."/>
            <person name="Kamekura M."/>
            <person name="DasSarma S."/>
            <person name="Fukushima T."/>
            <person name="Usami R."/>
            <person name="Yoshida Y."/>
            <person name="Horikoshi K."/>
        </authorList>
    </citation>
    <scope>NUCLEOTIDE SEQUENCE [GENOMIC DNA]</scope>
    <source>
        <strain>ATCC 43049 / DSM 3752 / JCM 8966 / VKM B-1809</strain>
    </source>
</reference>
<reference key="2">
    <citation type="journal article" date="2004" name="Genome Res.">
        <title>Genome sequence of Haloarcula marismortui: a halophilic archaeon from the Dead Sea.</title>
        <authorList>
            <person name="Baliga N.S."/>
            <person name="Bonneau R."/>
            <person name="Facciotti M.T."/>
            <person name="Pan M."/>
            <person name="Glusman G."/>
            <person name="Deutsch E.W."/>
            <person name="Shannon P."/>
            <person name="Chiu Y."/>
            <person name="Weng R.S."/>
            <person name="Gan R.R."/>
            <person name="Hung P."/>
            <person name="Date S.V."/>
            <person name="Marcotte E."/>
            <person name="Hood L."/>
            <person name="Ng W.V."/>
        </authorList>
    </citation>
    <scope>NUCLEOTIDE SEQUENCE [LARGE SCALE GENOMIC DNA]</scope>
    <source>
        <strain>ATCC 43049 / DSM 3752 / JCM 8966 / VKM B-1809</strain>
        <plasmid>pNG700</plasmid>
    </source>
</reference>